<accession>P82789</accession>
<accession>A0MJT6</accession>
<accession>Q1PDQ7</accession>
<reference evidence="3" key="1">
    <citation type="journal article" date="1998" name="DNA Res.">
        <title>Structural analysis of Arabidopsis thaliana chromosome 5. V. Sequence features of the regions of 1,381,565 bp covered by twenty one physically assigned P1 and TAC clones.</title>
        <authorList>
            <person name="Kaneko T."/>
            <person name="Kotani H."/>
            <person name="Nakamura Y."/>
            <person name="Sato S."/>
            <person name="Asamizu E."/>
            <person name="Miyajima N."/>
            <person name="Tabata S."/>
        </authorList>
    </citation>
    <scope>NUCLEOTIDE SEQUENCE [LARGE SCALE GENOMIC DNA]</scope>
    <source>
        <strain>cv. Columbia</strain>
    </source>
</reference>
<reference key="2">
    <citation type="journal article" date="2017" name="Plant J.">
        <title>Araport11: a complete reannotation of the Arabidopsis thaliana reference genome.</title>
        <authorList>
            <person name="Cheng C.Y."/>
            <person name="Krishnakumar V."/>
            <person name="Chan A.P."/>
            <person name="Thibaud-Nissen F."/>
            <person name="Schobel S."/>
            <person name="Town C.D."/>
        </authorList>
    </citation>
    <scope>GENOME REANNOTATION</scope>
    <source>
        <strain>cv. Columbia</strain>
    </source>
</reference>
<reference key="3">
    <citation type="journal article" date="2006" name="Plant Biotechnol. J.">
        <title>Simultaneous high-throughput recombinational cloning of open reading frames in closed and open configurations.</title>
        <authorList>
            <person name="Underwood B.A."/>
            <person name="Vanderhaeghen R."/>
            <person name="Whitford R."/>
            <person name="Town C.D."/>
            <person name="Hilson P."/>
        </authorList>
    </citation>
    <scope>NUCLEOTIDE SEQUENCE [LARGE SCALE MRNA]</scope>
    <source>
        <strain>cv. Columbia</strain>
    </source>
</reference>
<reference key="4">
    <citation type="journal article" date="2007" name="Plant J.">
        <title>Small cysteine-rich peptides resembling antimicrobial peptides have been under-predicted in plants.</title>
        <authorList>
            <person name="Silverstein K.A.T."/>
            <person name="Moskal W.A. Jr."/>
            <person name="Wu H.C."/>
            <person name="Underwood B.A."/>
            <person name="Graham M.A."/>
            <person name="Town C.D."/>
            <person name="VandenBosch K.A."/>
        </authorList>
    </citation>
    <scope>NUCLEOTIDE SEQUENCE [LARGE SCALE MRNA]</scope>
    <source>
        <strain>cv. Columbia</strain>
    </source>
</reference>
<reference evidence="3" key="5">
    <citation type="journal article" date="2001" name="Plant Mol. Biol.">
        <title>Two large Arabidopsis thaliana gene families are homologous to the Brassica gene superfamily that encodes pollen coat proteins and the male component of the self-incompatibility response.</title>
        <authorList>
            <person name="Vanoosthuyse V."/>
            <person name="Miege C."/>
            <person name="Dumas C."/>
            <person name="Cock J.M."/>
        </authorList>
    </citation>
    <scope>IDENTIFICATION</scope>
</reference>
<reference key="6">
    <citation type="journal article" date="2002" name="Planta">
        <title>Plant defensins.</title>
        <authorList>
            <person name="Thomma B.P.H.J."/>
            <person name="Cammue B.P."/>
            <person name="Thevissen K."/>
        </authorList>
    </citation>
    <scope>GENE FAMILY</scope>
    <scope>NOMENCLATURE</scope>
</reference>
<reference key="7">
    <citation type="journal article" date="2005" name="Plant Physiol.">
        <title>Genome organization of more than 300 defensin-like genes in Arabidopsis.</title>
        <authorList>
            <person name="Silverstein K.A.T."/>
            <person name="Graham M.A."/>
            <person name="Paape T.D."/>
            <person name="VandenBosch K.A."/>
        </authorList>
    </citation>
    <scope>GENE FAMILY</scope>
</reference>
<keyword id="KW-0929">Antimicrobial</keyword>
<keyword id="KW-1015">Disulfide bond</keyword>
<keyword id="KW-0295">Fungicide</keyword>
<keyword id="KW-0611">Plant defense</keyword>
<keyword id="KW-1185">Reference proteome</keyword>
<keyword id="KW-0964">Secreted</keyword>
<keyword id="KW-0732">Signal</keyword>
<gene>
    <name type="primary">PDF3.1</name>
    <name type="synonym">LCR80</name>
    <name type="ordered locus">At5g38330</name>
    <name type="ORF">MSI17.50</name>
</gene>
<sequence>MERIPSLASLVSLLIIFATVVNQTRASICNDRLGLCDGCDQRCKAKHGPSCESKCDGPVGMLLCTCTYECGPTKLCNGGLGNCGESCNEQCCDRNCAQRYNGGHGYCNTLDDFSLCLCKYPC</sequence>
<evidence type="ECO:0000250" key="1"/>
<evidence type="ECO:0000255" key="2"/>
<evidence type="ECO:0000305" key="3"/>
<name>DF181_ARATH</name>
<proteinExistence type="evidence at transcript level"/>
<comment type="function">
    <text>Confers broad-spectrum resistance to pathogens.</text>
</comment>
<comment type="subcellular location">
    <subcellularLocation>
        <location evidence="1">Secreted</location>
    </subcellularLocation>
</comment>
<comment type="similarity">
    <text evidence="3">Belongs to the DEFL family.</text>
</comment>
<comment type="caution">
    <text evidence="3">Contains 8 disulfide bonds instead of the 4 disulfide bonds, which are conserved features of the family.</text>
</comment>
<comment type="sequence caution" evidence="3">
    <conflict type="erroneous termination">
        <sequence resource="EMBL-CDS" id="ABK27946"/>
    </conflict>
    <text>Extended C-terminus.</text>
</comment>
<organism evidence="3">
    <name type="scientific">Arabidopsis thaliana</name>
    <name type="common">Mouse-ear cress</name>
    <dbReference type="NCBI Taxonomy" id="3702"/>
    <lineage>
        <taxon>Eukaryota</taxon>
        <taxon>Viridiplantae</taxon>
        <taxon>Streptophyta</taxon>
        <taxon>Embryophyta</taxon>
        <taxon>Tracheophyta</taxon>
        <taxon>Spermatophyta</taxon>
        <taxon>Magnoliopsida</taxon>
        <taxon>eudicotyledons</taxon>
        <taxon>Gunneridae</taxon>
        <taxon>Pentapetalae</taxon>
        <taxon>rosids</taxon>
        <taxon>malvids</taxon>
        <taxon>Brassicales</taxon>
        <taxon>Brassicaceae</taxon>
        <taxon>Camelineae</taxon>
        <taxon>Arabidopsis</taxon>
    </lineage>
</organism>
<dbReference type="EMBL" id="AB011481">
    <property type="status" value="NOT_ANNOTATED_CDS"/>
    <property type="molecule type" value="Genomic_DNA"/>
</dbReference>
<dbReference type="EMBL" id="CP002688">
    <property type="protein sequence ID" value="AED94298.1"/>
    <property type="molecule type" value="Genomic_DNA"/>
</dbReference>
<dbReference type="EMBL" id="DQ447011">
    <property type="protein sequence ID" value="ABE66199.1"/>
    <property type="molecule type" value="mRNA"/>
</dbReference>
<dbReference type="EMBL" id="DQ912235">
    <property type="protein sequence ID" value="ABK27946.1"/>
    <property type="status" value="ALT_SEQ"/>
    <property type="molecule type" value="mRNA"/>
</dbReference>
<dbReference type="EMBL" id="EF182827">
    <property type="status" value="NOT_ANNOTATED_CDS"/>
    <property type="molecule type" value="mRNA"/>
</dbReference>
<dbReference type="RefSeq" id="NP_198649.2">
    <property type="nucleotide sequence ID" value="NM_123194.3"/>
</dbReference>
<dbReference type="STRING" id="3702.P82789"/>
<dbReference type="PaxDb" id="3702-AT5G38330.1"/>
<dbReference type="ProteomicsDB" id="224241"/>
<dbReference type="EnsemblPlants" id="AT5G38330.1">
    <property type="protein sequence ID" value="AT5G38330.1"/>
    <property type="gene ID" value="AT5G38330"/>
</dbReference>
<dbReference type="GeneID" id="833815"/>
<dbReference type="Gramene" id="AT5G38330.1">
    <property type="protein sequence ID" value="AT5G38330.1"/>
    <property type="gene ID" value="AT5G38330"/>
</dbReference>
<dbReference type="KEGG" id="ath:AT5G38330"/>
<dbReference type="Araport" id="AT5G38330"/>
<dbReference type="TAIR" id="AT5G38330">
    <property type="gene designation" value="LCR80"/>
</dbReference>
<dbReference type="eggNOG" id="ENOG502SD1Z">
    <property type="taxonomic scope" value="Eukaryota"/>
</dbReference>
<dbReference type="HOGENOM" id="CLU_158287_1_1_1"/>
<dbReference type="InParanoid" id="P82789"/>
<dbReference type="OMA" id="RADICVD"/>
<dbReference type="PhylomeDB" id="P82789"/>
<dbReference type="PRO" id="PR:P82789"/>
<dbReference type="Proteomes" id="UP000006548">
    <property type="component" value="Chromosome 5"/>
</dbReference>
<dbReference type="ExpressionAtlas" id="P82789">
    <property type="expression patterns" value="baseline and differential"/>
</dbReference>
<dbReference type="GO" id="GO:0005576">
    <property type="term" value="C:extracellular region"/>
    <property type="evidence" value="ECO:0007669"/>
    <property type="project" value="UniProtKB-SubCell"/>
</dbReference>
<dbReference type="GO" id="GO:0006952">
    <property type="term" value="P:defense response"/>
    <property type="evidence" value="ECO:0000250"/>
    <property type="project" value="TAIR"/>
</dbReference>
<dbReference type="GO" id="GO:0050832">
    <property type="term" value="P:defense response to fungus"/>
    <property type="evidence" value="ECO:0007669"/>
    <property type="project" value="UniProtKB-KW"/>
</dbReference>
<dbReference type="GO" id="GO:0031640">
    <property type="term" value="P:killing of cells of another organism"/>
    <property type="evidence" value="ECO:0007669"/>
    <property type="project" value="UniProtKB-KW"/>
</dbReference>
<dbReference type="InterPro" id="IPR039641">
    <property type="entry name" value="LCR"/>
</dbReference>
<dbReference type="PANTHER" id="PTHR36788:SF4">
    <property type="entry name" value="DEFENSIN-LIKE PROTEIN 181-RELATED"/>
    <property type="match status" value="1"/>
</dbReference>
<dbReference type="PANTHER" id="PTHR36788">
    <property type="entry name" value="DEFENSIN-LIKE PROTEIN 183"/>
    <property type="match status" value="1"/>
</dbReference>
<protein>
    <recommendedName>
        <fullName>Defensin-like protein 181</fullName>
    </recommendedName>
    <alternativeName>
        <fullName>Low-molecular-weight cysteine-rich protein 80</fullName>
        <shortName>Protein LCR80</shortName>
    </alternativeName>
    <alternativeName>
        <fullName>Plant defensin 3.1</fullName>
    </alternativeName>
</protein>
<feature type="signal peptide" evidence="2">
    <location>
        <begin position="1"/>
        <end position="26"/>
    </location>
</feature>
<feature type="chain" id="PRO_0000017304" description="Defensin-like protein 181">
    <location>
        <begin position="27"/>
        <end position="122"/>
    </location>
</feature>
<feature type="disulfide bond" evidence="1">
    <location>
        <begin position="29"/>
        <end position="70"/>
    </location>
</feature>
<feature type="disulfide bond" evidence="1">
    <location>
        <begin position="36"/>
        <end position="55"/>
    </location>
</feature>
<feature type="disulfide bond" evidence="1">
    <location>
        <begin position="39"/>
        <end position="64"/>
    </location>
</feature>
<feature type="disulfide bond" evidence="1">
    <location>
        <begin position="43"/>
        <end position="66"/>
    </location>
</feature>
<feature type="disulfide bond" evidence="1">
    <location>
        <begin position="76"/>
        <end position="122"/>
    </location>
</feature>
<feature type="disulfide bond" evidence="1">
    <location>
        <begin position="87"/>
        <end position="107"/>
    </location>
</feature>
<feature type="disulfide bond" evidence="1">
    <location>
        <begin position="92"/>
        <end position="116"/>
    </location>
</feature>
<feature type="disulfide bond" evidence="1">
    <location>
        <begin position="96"/>
        <end position="118"/>
    </location>
</feature>